<feature type="chain" id="PRO_0000195772" description="Xylose isomerase">
    <location>
        <begin position="1"/>
        <end position="435"/>
    </location>
</feature>
<feature type="active site" evidence="1">
    <location>
        <position position="100"/>
    </location>
</feature>
<feature type="active site" evidence="1">
    <location>
        <position position="103"/>
    </location>
</feature>
<feature type="binding site" evidence="1">
    <location>
        <position position="231"/>
    </location>
    <ligand>
        <name>Mg(2+)</name>
        <dbReference type="ChEBI" id="CHEBI:18420"/>
        <label>1</label>
    </ligand>
</feature>
<feature type="binding site" evidence="1">
    <location>
        <position position="267"/>
    </location>
    <ligand>
        <name>Mg(2+)</name>
        <dbReference type="ChEBI" id="CHEBI:18420"/>
        <label>1</label>
    </ligand>
</feature>
<feature type="binding site" evidence="1">
    <location>
        <position position="267"/>
    </location>
    <ligand>
        <name>Mg(2+)</name>
        <dbReference type="ChEBI" id="CHEBI:18420"/>
        <label>2</label>
    </ligand>
</feature>
<feature type="binding site" evidence="1">
    <location>
        <position position="270"/>
    </location>
    <ligand>
        <name>Mg(2+)</name>
        <dbReference type="ChEBI" id="CHEBI:18420"/>
        <label>2</label>
    </ligand>
</feature>
<feature type="binding site" evidence="1">
    <location>
        <position position="295"/>
    </location>
    <ligand>
        <name>Mg(2+)</name>
        <dbReference type="ChEBI" id="CHEBI:18420"/>
        <label>1</label>
    </ligand>
</feature>
<feature type="binding site" evidence="1">
    <location>
        <position position="306"/>
    </location>
    <ligand>
        <name>Mg(2+)</name>
        <dbReference type="ChEBI" id="CHEBI:18420"/>
        <label>2</label>
    </ligand>
</feature>
<feature type="binding site" evidence="1">
    <location>
        <position position="308"/>
    </location>
    <ligand>
        <name>Mg(2+)</name>
        <dbReference type="ChEBI" id="CHEBI:18420"/>
        <label>2</label>
    </ligand>
</feature>
<feature type="binding site" evidence="1">
    <location>
        <position position="338"/>
    </location>
    <ligand>
        <name>Mg(2+)</name>
        <dbReference type="ChEBI" id="CHEBI:18420"/>
        <label>1</label>
    </ligand>
</feature>
<keyword id="KW-0119">Carbohydrate metabolism</keyword>
<keyword id="KW-0963">Cytoplasm</keyword>
<keyword id="KW-0413">Isomerase</keyword>
<keyword id="KW-0460">Magnesium</keyword>
<keyword id="KW-0479">Metal-binding</keyword>
<keyword id="KW-0859">Xylose metabolism</keyword>
<protein>
    <recommendedName>
        <fullName evidence="1">Xylose isomerase</fullName>
        <ecNumber evidence="1">5.3.1.5</ecNumber>
    </recommendedName>
</protein>
<proteinExistence type="inferred from homology"/>
<organism>
    <name type="scientific">Brucella suis biovar 1 (strain 1330)</name>
    <dbReference type="NCBI Taxonomy" id="204722"/>
    <lineage>
        <taxon>Bacteria</taxon>
        <taxon>Pseudomonadati</taxon>
        <taxon>Pseudomonadota</taxon>
        <taxon>Alphaproteobacteria</taxon>
        <taxon>Hyphomicrobiales</taxon>
        <taxon>Brucellaceae</taxon>
        <taxon>Brucella/Ochrobactrum group</taxon>
        <taxon>Brucella</taxon>
    </lineage>
</organism>
<comment type="catalytic activity">
    <reaction evidence="1">
        <text>alpha-D-xylose = alpha-D-xylulofuranose</text>
        <dbReference type="Rhea" id="RHEA:22816"/>
        <dbReference type="ChEBI" id="CHEBI:28518"/>
        <dbReference type="ChEBI" id="CHEBI:188998"/>
        <dbReference type="EC" id="5.3.1.5"/>
    </reaction>
</comment>
<comment type="cofactor">
    <cofactor evidence="1">
        <name>Mg(2+)</name>
        <dbReference type="ChEBI" id="CHEBI:18420"/>
    </cofactor>
    <text evidence="1">Binds 2 magnesium ions per subunit.</text>
</comment>
<comment type="subunit">
    <text evidence="1">Homotetramer.</text>
</comment>
<comment type="subcellular location">
    <subcellularLocation>
        <location evidence="1">Cytoplasm</location>
    </subcellularLocation>
</comment>
<comment type="similarity">
    <text evidence="1">Belongs to the xylose isomerase family.</text>
</comment>
<dbReference type="EC" id="5.3.1.5" evidence="1"/>
<dbReference type="EMBL" id="AE014291">
    <property type="protein sequence ID" value="AAN29478.1"/>
    <property type="molecule type" value="Genomic_DNA"/>
</dbReference>
<dbReference type="EMBL" id="CP002997">
    <property type="protein sequence ID" value="AEM17895.1"/>
    <property type="molecule type" value="Genomic_DNA"/>
</dbReference>
<dbReference type="RefSeq" id="WP_006189966.1">
    <property type="nucleotide sequence ID" value="NZ_KN046804.1"/>
</dbReference>
<dbReference type="SMR" id="Q8G204"/>
<dbReference type="GeneID" id="45051640"/>
<dbReference type="KEGG" id="bms:BR0547"/>
<dbReference type="KEGG" id="bsi:BS1330_I0543"/>
<dbReference type="PATRIC" id="fig|204722.21.peg.2838"/>
<dbReference type="HOGENOM" id="CLU_037261_1_0_5"/>
<dbReference type="Proteomes" id="UP000007104">
    <property type="component" value="Chromosome I"/>
</dbReference>
<dbReference type="GO" id="GO:0005737">
    <property type="term" value="C:cytoplasm"/>
    <property type="evidence" value="ECO:0007669"/>
    <property type="project" value="UniProtKB-SubCell"/>
</dbReference>
<dbReference type="GO" id="GO:0000287">
    <property type="term" value="F:magnesium ion binding"/>
    <property type="evidence" value="ECO:0007669"/>
    <property type="project" value="UniProtKB-UniRule"/>
</dbReference>
<dbReference type="GO" id="GO:0009045">
    <property type="term" value="F:xylose isomerase activity"/>
    <property type="evidence" value="ECO:0007669"/>
    <property type="project" value="UniProtKB-UniRule"/>
</dbReference>
<dbReference type="GO" id="GO:0042732">
    <property type="term" value="P:D-xylose metabolic process"/>
    <property type="evidence" value="ECO:0007669"/>
    <property type="project" value="UniProtKB-UniRule"/>
</dbReference>
<dbReference type="FunFam" id="3.20.20.150:FF:000002">
    <property type="entry name" value="Xylose isomerase"/>
    <property type="match status" value="1"/>
</dbReference>
<dbReference type="Gene3D" id="3.20.20.150">
    <property type="entry name" value="Divalent-metal-dependent TIM barrel enzymes"/>
    <property type="match status" value="1"/>
</dbReference>
<dbReference type="HAMAP" id="MF_00455">
    <property type="entry name" value="Xylose_isom_A"/>
    <property type="match status" value="1"/>
</dbReference>
<dbReference type="InterPro" id="IPR036237">
    <property type="entry name" value="Xyl_isomerase-like_sf"/>
</dbReference>
<dbReference type="InterPro" id="IPR013452">
    <property type="entry name" value="Xylose_isom_bac"/>
</dbReference>
<dbReference type="InterPro" id="IPR001998">
    <property type="entry name" value="Xylose_isomerase"/>
</dbReference>
<dbReference type="NCBIfam" id="NF003998">
    <property type="entry name" value="PRK05474.1"/>
    <property type="match status" value="1"/>
</dbReference>
<dbReference type="NCBIfam" id="TIGR02630">
    <property type="entry name" value="xylose_isom_A"/>
    <property type="match status" value="1"/>
</dbReference>
<dbReference type="PANTHER" id="PTHR48408">
    <property type="match status" value="1"/>
</dbReference>
<dbReference type="PANTHER" id="PTHR48408:SF1">
    <property type="entry name" value="XYLOSE ISOMERASE"/>
    <property type="match status" value="1"/>
</dbReference>
<dbReference type="PRINTS" id="PR00688">
    <property type="entry name" value="XYLOSISMRASE"/>
</dbReference>
<dbReference type="SUPFAM" id="SSF51658">
    <property type="entry name" value="Xylose isomerase-like"/>
    <property type="match status" value="1"/>
</dbReference>
<dbReference type="PROSITE" id="PS51415">
    <property type="entry name" value="XYLOSE_ISOMERASE"/>
    <property type="match status" value="1"/>
</dbReference>
<name>XYLA_BRUSU</name>
<sequence>MSTGFFGDIQKVRYEGPESDNPLAFRHYNADEIVLGKRMEDHLRFAVAYWHSFAWEGGDPFGGRTFDRPWFSNEIDAAKLKADVAFEFFSLLGAPYYCFHDADVRPEGRNFAENTRYLNEIVDIFEKKQAETGMKLLWGTANLFSNRRYMAGAATNPDPDVFAFAAATVKTCIDATKRLGGENYVLWGGREGYETLLNTDLSRELDHMGRFLSLVVEYKHKIGFKGTILIEPKPQEPTKHQYDYDVATVYGFLKRYGLENEVKVNIEQGHAILAGHSFEHELALARTLGIFGSIDMNRNDYQSGWDTDQFPNNVPEMALAYYQVLLAGGFTTGGTNFDAKLRRQSLDSQDLLIGHIGGMDCCARGLKAAARMLEDGALSKPLDERYAGWNGEFGKRLLSGLSLDQIAGEVEAKDINPQPKSGRQEYLENIVNHYV</sequence>
<accession>Q8G204</accession>
<accession>G0K7G7</accession>
<reference key="1">
    <citation type="journal article" date="2002" name="Proc. Natl. Acad. Sci. U.S.A.">
        <title>The Brucella suis genome reveals fundamental similarities between animal and plant pathogens and symbionts.</title>
        <authorList>
            <person name="Paulsen I.T."/>
            <person name="Seshadri R."/>
            <person name="Nelson K.E."/>
            <person name="Eisen J.A."/>
            <person name="Heidelberg J.F."/>
            <person name="Read T.D."/>
            <person name="Dodson R.J."/>
            <person name="Umayam L.A."/>
            <person name="Brinkac L.M."/>
            <person name="Beanan M.J."/>
            <person name="Daugherty S.C."/>
            <person name="DeBoy R.T."/>
            <person name="Durkin A.S."/>
            <person name="Kolonay J.F."/>
            <person name="Madupu R."/>
            <person name="Nelson W.C."/>
            <person name="Ayodeji B."/>
            <person name="Kraul M."/>
            <person name="Shetty J."/>
            <person name="Malek J.A."/>
            <person name="Van Aken S.E."/>
            <person name="Riedmuller S."/>
            <person name="Tettelin H."/>
            <person name="Gill S.R."/>
            <person name="White O."/>
            <person name="Salzberg S.L."/>
            <person name="Hoover D.L."/>
            <person name="Lindler L.E."/>
            <person name="Halling S.M."/>
            <person name="Boyle S.M."/>
            <person name="Fraser C.M."/>
        </authorList>
    </citation>
    <scope>NUCLEOTIDE SEQUENCE [LARGE SCALE GENOMIC DNA]</scope>
    <source>
        <strain>1330</strain>
    </source>
</reference>
<reference key="2">
    <citation type="journal article" date="2011" name="J. Bacteriol.">
        <title>Revised genome sequence of Brucella suis 1330.</title>
        <authorList>
            <person name="Tae H."/>
            <person name="Shallom S."/>
            <person name="Settlage R."/>
            <person name="Preston D."/>
            <person name="Adams L.G."/>
            <person name="Garner H.R."/>
        </authorList>
    </citation>
    <scope>NUCLEOTIDE SEQUENCE [LARGE SCALE GENOMIC DNA]</scope>
    <source>
        <strain>1330</strain>
    </source>
</reference>
<evidence type="ECO:0000255" key="1">
    <source>
        <dbReference type="HAMAP-Rule" id="MF_00455"/>
    </source>
</evidence>
<gene>
    <name evidence="1" type="primary">xylA</name>
    <name type="ordered locus">BR0547</name>
    <name type="ordered locus">BS1330_I0543</name>
</gene>